<protein>
    <recommendedName>
        <fullName evidence="1">UPF0756 membrane protein Dd1591_2981</fullName>
    </recommendedName>
</protein>
<reference key="1">
    <citation type="submission" date="2009-06" db="EMBL/GenBank/DDBJ databases">
        <title>Complete sequence of Dickeya zeae Ech1591.</title>
        <authorList>
            <consortium name="US DOE Joint Genome Institute"/>
            <person name="Lucas S."/>
            <person name="Copeland A."/>
            <person name="Lapidus A."/>
            <person name="Glavina del Rio T."/>
            <person name="Tice H."/>
            <person name="Bruce D."/>
            <person name="Goodwin L."/>
            <person name="Pitluck S."/>
            <person name="Chertkov O."/>
            <person name="Brettin T."/>
            <person name="Detter J.C."/>
            <person name="Han C."/>
            <person name="Larimer F."/>
            <person name="Land M."/>
            <person name="Hauser L."/>
            <person name="Kyrpides N."/>
            <person name="Ovchinnikova G."/>
            <person name="Balakrishnan V."/>
            <person name="Glasner J."/>
            <person name="Perna N.T."/>
        </authorList>
    </citation>
    <scope>NUCLEOTIDE SEQUENCE [LARGE SCALE GENOMIC DNA]</scope>
    <source>
        <strain>Ech1591</strain>
    </source>
</reference>
<feature type="chain" id="PRO_5000484530" description="UPF0756 membrane protein Dd1591_2981">
    <location>
        <begin position="1"/>
        <end position="150"/>
    </location>
</feature>
<feature type="transmembrane region" description="Helical" evidence="1">
    <location>
        <begin position="10"/>
        <end position="32"/>
    </location>
</feature>
<feature type="transmembrane region" description="Helical" evidence="1">
    <location>
        <begin position="51"/>
        <end position="71"/>
    </location>
</feature>
<feature type="transmembrane region" description="Helical" evidence="1">
    <location>
        <begin position="88"/>
        <end position="108"/>
    </location>
</feature>
<feature type="transmembrane region" description="Helical" evidence="1">
    <location>
        <begin position="127"/>
        <end position="147"/>
    </location>
</feature>
<keyword id="KW-1003">Cell membrane</keyword>
<keyword id="KW-0472">Membrane</keyword>
<keyword id="KW-0812">Transmembrane</keyword>
<keyword id="KW-1133">Transmembrane helix</keyword>
<accession>C6CQK7</accession>
<evidence type="ECO:0000255" key="1">
    <source>
        <dbReference type="HAMAP-Rule" id="MF_01874"/>
    </source>
</evidence>
<sequence>MGVFDPTLLILLALAALGIISQNMTVTLAILFLVAVRITPLNHYFPWVEKYGLSFGVLVLTIGVMAPIASGKISAGDVLSSFLHWKSLMAVAIGVAVSWLGGRGVVLMSNQPSVVAGLLVGTVMGVALFRGVPVGPLIAAGLLSLLIGKG</sequence>
<comment type="subcellular location">
    <subcellularLocation>
        <location evidence="1">Cell membrane</location>
        <topology evidence="1">Multi-pass membrane protein</topology>
    </subcellularLocation>
</comment>
<comment type="similarity">
    <text evidence="1">Belongs to the UPF0756 family.</text>
</comment>
<gene>
    <name type="ordered locus">Dd1591_2981</name>
</gene>
<organism>
    <name type="scientific">Dickeya chrysanthemi (strain Ech1591)</name>
    <name type="common">Dickeya zeae (strain Ech1591)</name>
    <dbReference type="NCBI Taxonomy" id="561229"/>
    <lineage>
        <taxon>Bacteria</taxon>
        <taxon>Pseudomonadati</taxon>
        <taxon>Pseudomonadota</taxon>
        <taxon>Gammaproteobacteria</taxon>
        <taxon>Enterobacterales</taxon>
        <taxon>Pectobacteriaceae</taxon>
        <taxon>Dickeya</taxon>
    </lineage>
</organism>
<proteinExistence type="inferred from homology"/>
<name>Y2981_DICC1</name>
<dbReference type="EMBL" id="CP001655">
    <property type="protein sequence ID" value="ACT07803.1"/>
    <property type="molecule type" value="Genomic_DNA"/>
</dbReference>
<dbReference type="RefSeq" id="WP_012770655.1">
    <property type="nucleotide sequence ID" value="NC_012912.1"/>
</dbReference>
<dbReference type="STRING" id="561229.Dd1591_2981"/>
<dbReference type="GeneID" id="45081038"/>
<dbReference type="KEGG" id="dze:Dd1591_2981"/>
<dbReference type="eggNOG" id="COG2707">
    <property type="taxonomic scope" value="Bacteria"/>
</dbReference>
<dbReference type="HOGENOM" id="CLU_125889_0_0_6"/>
<dbReference type="OrthoDB" id="80306at2"/>
<dbReference type="Proteomes" id="UP000002735">
    <property type="component" value="Chromosome"/>
</dbReference>
<dbReference type="GO" id="GO:0005886">
    <property type="term" value="C:plasma membrane"/>
    <property type="evidence" value="ECO:0007669"/>
    <property type="project" value="UniProtKB-SubCell"/>
</dbReference>
<dbReference type="HAMAP" id="MF_01874">
    <property type="entry name" value="UPF0756"/>
    <property type="match status" value="1"/>
</dbReference>
<dbReference type="InterPro" id="IPR007382">
    <property type="entry name" value="UPF0756_TM"/>
</dbReference>
<dbReference type="PANTHER" id="PTHR38452">
    <property type="entry name" value="UPF0756 MEMBRANE PROTEIN YEAL"/>
    <property type="match status" value="1"/>
</dbReference>
<dbReference type="PANTHER" id="PTHR38452:SF1">
    <property type="entry name" value="UPF0756 MEMBRANE PROTEIN YEAL"/>
    <property type="match status" value="1"/>
</dbReference>
<dbReference type="Pfam" id="PF04284">
    <property type="entry name" value="DUF441"/>
    <property type="match status" value="1"/>
</dbReference>